<sequence>MSTRRDLPQSPYLAAVTGRKPSRVPVWFMRQAGRSLPEYRALRERYSMLAACFEPDVACEITLQPIRRYDVDAAILFSDIVVPLRAAGVDLDIVADVGPVIADPVRTAADVAAMKPLDPQAIQPVLVAASLLVAELGDVPLIGFAGAPFTLASYLVEGGPSRHHAHVKAMMLAEPASWHALMAKLTDLTIAFLVGQIDAGVDAIQVFDSWAGALSPIDYRQYVLPHSARVFAALGEHGVPMTHFGVGTAELLGAMSEAVTAGERPGRGAVVGVDWRTPLTDAAARVVPGTALQGNLDPAVVLAGWPAVERAARAVVDDGRRAVDAGAAGHIFNLGHGVLPESDPAVLADLVSLVHSL</sequence>
<proteinExistence type="inferred from homology"/>
<comment type="function">
    <text evidence="1">Catalyzes the decarboxylation of four acetate groups of uroporphyrinogen-III to yield coproporphyrinogen-III.</text>
</comment>
<comment type="catalytic activity">
    <reaction evidence="1">
        <text>uroporphyrinogen III + 4 H(+) = coproporphyrinogen III + 4 CO2</text>
        <dbReference type="Rhea" id="RHEA:19865"/>
        <dbReference type="ChEBI" id="CHEBI:15378"/>
        <dbReference type="ChEBI" id="CHEBI:16526"/>
        <dbReference type="ChEBI" id="CHEBI:57308"/>
        <dbReference type="ChEBI" id="CHEBI:57309"/>
        <dbReference type="EC" id="4.1.1.37"/>
    </reaction>
</comment>
<comment type="pathway">
    <text evidence="1">Porphyrin-containing compound metabolism; protoporphyrin-IX biosynthesis; coproporphyrinogen-III from 5-aminolevulinate: step 4/4.</text>
</comment>
<comment type="subunit">
    <text evidence="1">Homodimer.</text>
</comment>
<comment type="subcellular location">
    <subcellularLocation>
        <location evidence="1">Cytoplasm</location>
    </subcellularLocation>
</comment>
<comment type="similarity">
    <text evidence="1">Belongs to the uroporphyrinogen decarboxylase family.</text>
</comment>
<accession>A1KM16</accession>
<reference key="1">
    <citation type="journal article" date="2007" name="Proc. Natl. Acad. Sci. U.S.A.">
        <title>Genome plasticity of BCG and impact on vaccine efficacy.</title>
        <authorList>
            <person name="Brosch R."/>
            <person name="Gordon S.V."/>
            <person name="Garnier T."/>
            <person name="Eiglmeier K."/>
            <person name="Frigui W."/>
            <person name="Valenti P."/>
            <person name="Dos Santos S."/>
            <person name="Duthoy S."/>
            <person name="Lacroix C."/>
            <person name="Garcia-Pelayo C."/>
            <person name="Inwald J.K."/>
            <person name="Golby P."/>
            <person name="Garcia J.N."/>
            <person name="Hewinson R.G."/>
            <person name="Behr M.A."/>
            <person name="Quail M.A."/>
            <person name="Churcher C."/>
            <person name="Barrell B.G."/>
            <person name="Parkhill J."/>
            <person name="Cole S.T."/>
        </authorList>
    </citation>
    <scope>NUCLEOTIDE SEQUENCE [LARGE SCALE GENOMIC DNA]</scope>
    <source>
        <strain>BCG / Pasteur 1173P2</strain>
    </source>
</reference>
<keyword id="KW-0963">Cytoplasm</keyword>
<keyword id="KW-0210">Decarboxylase</keyword>
<keyword id="KW-0456">Lyase</keyword>
<keyword id="KW-0627">Porphyrin biosynthesis</keyword>
<protein>
    <recommendedName>
        <fullName evidence="1">Uroporphyrinogen decarboxylase</fullName>
        <shortName evidence="1">UPD</shortName>
        <shortName evidence="1">URO-D</shortName>
        <ecNumber evidence="1">4.1.1.37</ecNumber>
    </recommendedName>
</protein>
<dbReference type="EC" id="4.1.1.37" evidence="1"/>
<dbReference type="EMBL" id="AM408590">
    <property type="protein sequence ID" value="CAL72679.1"/>
    <property type="molecule type" value="Genomic_DNA"/>
</dbReference>
<dbReference type="RefSeq" id="WP_003413873.1">
    <property type="nucleotide sequence ID" value="NC_008769.1"/>
</dbReference>
<dbReference type="SMR" id="A1KM16"/>
<dbReference type="GeneID" id="45426666"/>
<dbReference type="KEGG" id="mbb:BCG_2691c"/>
<dbReference type="HOGENOM" id="CLU_040933_0_1_11"/>
<dbReference type="UniPathway" id="UPA00251">
    <property type="reaction ID" value="UER00321"/>
</dbReference>
<dbReference type="Proteomes" id="UP000001472">
    <property type="component" value="Chromosome"/>
</dbReference>
<dbReference type="GO" id="GO:0005829">
    <property type="term" value="C:cytosol"/>
    <property type="evidence" value="ECO:0007669"/>
    <property type="project" value="TreeGrafter"/>
</dbReference>
<dbReference type="GO" id="GO:0004853">
    <property type="term" value="F:uroporphyrinogen decarboxylase activity"/>
    <property type="evidence" value="ECO:0007669"/>
    <property type="project" value="UniProtKB-UniRule"/>
</dbReference>
<dbReference type="GO" id="GO:0006782">
    <property type="term" value="P:protoporphyrinogen IX biosynthetic process"/>
    <property type="evidence" value="ECO:0007669"/>
    <property type="project" value="UniProtKB-UniRule"/>
</dbReference>
<dbReference type="CDD" id="cd00717">
    <property type="entry name" value="URO-D"/>
    <property type="match status" value="1"/>
</dbReference>
<dbReference type="FunFam" id="3.20.20.210:FF:000007">
    <property type="entry name" value="Uroporphyrinogen decarboxylase"/>
    <property type="match status" value="1"/>
</dbReference>
<dbReference type="Gene3D" id="3.20.20.210">
    <property type="match status" value="1"/>
</dbReference>
<dbReference type="HAMAP" id="MF_00218">
    <property type="entry name" value="URO_D"/>
    <property type="match status" value="1"/>
</dbReference>
<dbReference type="InterPro" id="IPR038071">
    <property type="entry name" value="UROD/MetE-like_sf"/>
</dbReference>
<dbReference type="InterPro" id="IPR006361">
    <property type="entry name" value="Uroporphyrinogen_deCO2ase_HemE"/>
</dbReference>
<dbReference type="InterPro" id="IPR000257">
    <property type="entry name" value="Uroporphyrinogen_deCOase"/>
</dbReference>
<dbReference type="NCBIfam" id="TIGR01464">
    <property type="entry name" value="hemE"/>
    <property type="match status" value="1"/>
</dbReference>
<dbReference type="PANTHER" id="PTHR21091">
    <property type="entry name" value="METHYLTETRAHYDROFOLATE:HOMOCYSTEINE METHYLTRANSFERASE RELATED"/>
    <property type="match status" value="1"/>
</dbReference>
<dbReference type="PANTHER" id="PTHR21091:SF169">
    <property type="entry name" value="UROPORPHYRINOGEN DECARBOXYLASE"/>
    <property type="match status" value="1"/>
</dbReference>
<dbReference type="Pfam" id="PF01208">
    <property type="entry name" value="URO-D"/>
    <property type="match status" value="1"/>
</dbReference>
<dbReference type="SUPFAM" id="SSF51726">
    <property type="entry name" value="UROD/MetE-like"/>
    <property type="match status" value="1"/>
</dbReference>
<dbReference type="PROSITE" id="PS00906">
    <property type="entry name" value="UROD_1"/>
    <property type="match status" value="1"/>
</dbReference>
<dbReference type="PROSITE" id="PS00907">
    <property type="entry name" value="UROD_2"/>
    <property type="match status" value="1"/>
</dbReference>
<name>DCUP_MYCBP</name>
<evidence type="ECO:0000255" key="1">
    <source>
        <dbReference type="HAMAP-Rule" id="MF_00218"/>
    </source>
</evidence>
<gene>
    <name evidence="1" type="primary">hemE</name>
    <name type="ordered locus">BCG_2691c</name>
</gene>
<organism>
    <name type="scientific">Mycobacterium bovis (strain BCG / Pasteur 1173P2)</name>
    <dbReference type="NCBI Taxonomy" id="410289"/>
    <lineage>
        <taxon>Bacteria</taxon>
        <taxon>Bacillati</taxon>
        <taxon>Actinomycetota</taxon>
        <taxon>Actinomycetes</taxon>
        <taxon>Mycobacteriales</taxon>
        <taxon>Mycobacteriaceae</taxon>
        <taxon>Mycobacterium</taxon>
        <taxon>Mycobacterium tuberculosis complex</taxon>
    </lineage>
</organism>
<feature type="chain" id="PRO_1000023920" description="Uroporphyrinogen decarboxylase">
    <location>
        <begin position="1"/>
        <end position="357"/>
    </location>
</feature>
<feature type="binding site" evidence="1">
    <location>
        <begin position="30"/>
        <end position="34"/>
    </location>
    <ligand>
        <name>substrate</name>
    </ligand>
</feature>
<feature type="binding site" evidence="1">
    <location>
        <position position="79"/>
    </location>
    <ligand>
        <name>substrate</name>
    </ligand>
</feature>
<feature type="binding site" evidence="1">
    <location>
        <position position="154"/>
    </location>
    <ligand>
        <name>substrate</name>
    </ligand>
</feature>
<feature type="binding site" evidence="1">
    <location>
        <position position="209"/>
    </location>
    <ligand>
        <name>substrate</name>
    </ligand>
</feature>
<feature type="binding site" evidence="1">
    <location>
        <position position="336"/>
    </location>
    <ligand>
        <name>substrate</name>
    </ligand>
</feature>
<feature type="site" description="Transition state stabilizer" evidence="1">
    <location>
        <position position="79"/>
    </location>
</feature>